<proteinExistence type="inferred from homology"/>
<reference key="1">
    <citation type="journal article" date="2011" name="J. Bacteriol.">
        <title>Comparative genomics of 28 Salmonella enterica isolates: evidence for CRISPR-mediated adaptive sublineage evolution.</title>
        <authorList>
            <person name="Fricke W.F."/>
            <person name="Mammel M.K."/>
            <person name="McDermott P.F."/>
            <person name="Tartera C."/>
            <person name="White D.G."/>
            <person name="Leclerc J.E."/>
            <person name="Ravel J."/>
            <person name="Cebula T.A."/>
        </authorList>
    </citation>
    <scope>NUCLEOTIDE SEQUENCE [LARGE SCALE GENOMIC DNA]</scope>
    <source>
        <strain>SL476</strain>
    </source>
</reference>
<comment type="function">
    <text evidence="1">Catalyzes the cleavage of 5-oxoproline to form L-glutamate coupled to the hydrolysis of ATP to ADP and inorganic phosphate.</text>
</comment>
<comment type="catalytic activity">
    <reaction evidence="1">
        <text>5-oxo-L-proline + ATP + 2 H2O = L-glutamate + ADP + phosphate + H(+)</text>
        <dbReference type="Rhea" id="RHEA:10348"/>
        <dbReference type="ChEBI" id="CHEBI:15377"/>
        <dbReference type="ChEBI" id="CHEBI:15378"/>
        <dbReference type="ChEBI" id="CHEBI:29985"/>
        <dbReference type="ChEBI" id="CHEBI:30616"/>
        <dbReference type="ChEBI" id="CHEBI:43474"/>
        <dbReference type="ChEBI" id="CHEBI:58402"/>
        <dbReference type="ChEBI" id="CHEBI:456216"/>
        <dbReference type="EC" id="3.5.2.9"/>
    </reaction>
</comment>
<comment type="subunit">
    <text evidence="1">Forms a complex composed of PxpA, PxpB and PxpC.</text>
</comment>
<comment type="similarity">
    <text evidence="1">Belongs to the LamB/PxpA family.</text>
</comment>
<sequence length="244" mass="26046">MNIDLNADLGEGCASDSELLTLVSSANIACGFHAGDAQTMLTCVREALKNGVAIGAHPSFPDRDNLGRTAMVLPPETVYAQTLYQIGALGAIVQAQGGVMRHVKPHGMLYNQAAKDPRLAQAIAKAVHDYDPSLILVGLAGSELIRAGERHRLVTRQEVFADRGYQADGSLVPRTQPGALIHDEEQALAQTLDMVQAGRVKSVTGVWTTVTAQTVCIHGDGEYALAFARRLRAAFNARNIHVIA</sequence>
<name>PXPA_SALHS</name>
<gene>
    <name evidence="1" type="primary">pxpA</name>
    <name type="ordered locus">SeHA_C0837</name>
</gene>
<protein>
    <recommendedName>
        <fullName evidence="1">5-oxoprolinase subunit A</fullName>
        <shortName evidence="1">5-OPase subunit A</shortName>
        <ecNumber evidence="1">3.5.2.9</ecNumber>
    </recommendedName>
    <alternativeName>
        <fullName evidence="1">5-oxoprolinase (ATP-hydrolyzing) subunit A</fullName>
    </alternativeName>
</protein>
<feature type="chain" id="PRO_1000132072" description="5-oxoprolinase subunit A">
    <location>
        <begin position="1"/>
        <end position="244"/>
    </location>
</feature>
<organism>
    <name type="scientific">Salmonella heidelberg (strain SL476)</name>
    <dbReference type="NCBI Taxonomy" id="454169"/>
    <lineage>
        <taxon>Bacteria</taxon>
        <taxon>Pseudomonadati</taxon>
        <taxon>Pseudomonadota</taxon>
        <taxon>Gammaproteobacteria</taxon>
        <taxon>Enterobacterales</taxon>
        <taxon>Enterobacteriaceae</taxon>
        <taxon>Salmonella</taxon>
    </lineage>
</organism>
<keyword id="KW-0067">ATP-binding</keyword>
<keyword id="KW-0378">Hydrolase</keyword>
<keyword id="KW-0547">Nucleotide-binding</keyword>
<dbReference type="EC" id="3.5.2.9" evidence="1"/>
<dbReference type="EMBL" id="CP001120">
    <property type="protein sequence ID" value="ACF66663.1"/>
    <property type="molecule type" value="Genomic_DNA"/>
</dbReference>
<dbReference type="RefSeq" id="WP_001017914.1">
    <property type="nucleotide sequence ID" value="NC_011083.1"/>
</dbReference>
<dbReference type="SMR" id="B4TBB5"/>
<dbReference type="KEGG" id="seh:SeHA_C0837"/>
<dbReference type="HOGENOM" id="CLU_069535_0_0_6"/>
<dbReference type="Proteomes" id="UP000001866">
    <property type="component" value="Chromosome"/>
</dbReference>
<dbReference type="GO" id="GO:0017168">
    <property type="term" value="F:5-oxoprolinase (ATP-hydrolyzing) activity"/>
    <property type="evidence" value="ECO:0007669"/>
    <property type="project" value="UniProtKB-UniRule"/>
</dbReference>
<dbReference type="GO" id="GO:0005524">
    <property type="term" value="F:ATP binding"/>
    <property type="evidence" value="ECO:0007669"/>
    <property type="project" value="UniProtKB-UniRule"/>
</dbReference>
<dbReference type="GO" id="GO:0005975">
    <property type="term" value="P:carbohydrate metabolic process"/>
    <property type="evidence" value="ECO:0007669"/>
    <property type="project" value="InterPro"/>
</dbReference>
<dbReference type="CDD" id="cd10800">
    <property type="entry name" value="LamB_YcsF_YbgL_like"/>
    <property type="match status" value="1"/>
</dbReference>
<dbReference type="Gene3D" id="3.20.20.370">
    <property type="entry name" value="Glycoside hydrolase/deacetylase"/>
    <property type="match status" value="1"/>
</dbReference>
<dbReference type="HAMAP" id="MF_00691">
    <property type="entry name" value="PxpA"/>
    <property type="match status" value="1"/>
</dbReference>
<dbReference type="InterPro" id="IPR011330">
    <property type="entry name" value="Glyco_hydro/deAcase_b/a-brl"/>
</dbReference>
<dbReference type="InterPro" id="IPR005501">
    <property type="entry name" value="LamB/YcsF/PxpA-like"/>
</dbReference>
<dbReference type="NCBIfam" id="NF003812">
    <property type="entry name" value="PRK05406.1-1"/>
    <property type="match status" value="1"/>
</dbReference>
<dbReference type="NCBIfam" id="NF003814">
    <property type="entry name" value="PRK05406.1-3"/>
    <property type="match status" value="1"/>
</dbReference>
<dbReference type="NCBIfam" id="NF003815">
    <property type="entry name" value="PRK05406.1-4"/>
    <property type="match status" value="1"/>
</dbReference>
<dbReference type="NCBIfam" id="NF003816">
    <property type="entry name" value="PRK05406.1-5"/>
    <property type="match status" value="1"/>
</dbReference>
<dbReference type="PANTHER" id="PTHR30292:SF0">
    <property type="entry name" value="5-OXOPROLINASE SUBUNIT A"/>
    <property type="match status" value="1"/>
</dbReference>
<dbReference type="PANTHER" id="PTHR30292">
    <property type="entry name" value="UNCHARACTERIZED PROTEIN YBGL-RELATED"/>
    <property type="match status" value="1"/>
</dbReference>
<dbReference type="Pfam" id="PF03746">
    <property type="entry name" value="LamB_YcsF"/>
    <property type="match status" value="1"/>
</dbReference>
<dbReference type="SUPFAM" id="SSF88713">
    <property type="entry name" value="Glycoside hydrolase/deacetylase"/>
    <property type="match status" value="1"/>
</dbReference>
<evidence type="ECO:0000255" key="1">
    <source>
        <dbReference type="HAMAP-Rule" id="MF_00691"/>
    </source>
</evidence>
<accession>B4TBB5</accession>